<name>SYE_HORVU</name>
<proteinExistence type="evidence at transcript level"/>
<dbReference type="EC" id="6.1.1.17"/>
<dbReference type="EMBL" id="X83523">
    <property type="protein sequence ID" value="CAA58505.1"/>
    <property type="molecule type" value="mRNA"/>
</dbReference>
<dbReference type="PIR" id="S51684">
    <property type="entry name" value="S51684"/>
</dbReference>
<dbReference type="SMR" id="Q43768"/>
<dbReference type="ExpressionAtlas" id="Q43768">
    <property type="expression patterns" value="baseline and differential"/>
</dbReference>
<dbReference type="GO" id="GO:0009507">
    <property type="term" value="C:chloroplast"/>
    <property type="evidence" value="ECO:0007669"/>
    <property type="project" value="UniProtKB-SubCell"/>
</dbReference>
<dbReference type="GO" id="GO:0005739">
    <property type="term" value="C:mitochondrion"/>
    <property type="evidence" value="ECO:0007669"/>
    <property type="project" value="UniProtKB-SubCell"/>
</dbReference>
<dbReference type="GO" id="GO:0005524">
    <property type="term" value="F:ATP binding"/>
    <property type="evidence" value="ECO:0007669"/>
    <property type="project" value="UniProtKB-KW"/>
</dbReference>
<dbReference type="GO" id="GO:0004818">
    <property type="term" value="F:glutamate-tRNA ligase activity"/>
    <property type="evidence" value="ECO:0007669"/>
    <property type="project" value="UniProtKB-EC"/>
</dbReference>
<dbReference type="GO" id="GO:0000049">
    <property type="term" value="F:tRNA binding"/>
    <property type="evidence" value="ECO:0007669"/>
    <property type="project" value="InterPro"/>
</dbReference>
<dbReference type="GO" id="GO:0008270">
    <property type="term" value="F:zinc ion binding"/>
    <property type="evidence" value="ECO:0007669"/>
    <property type="project" value="InterPro"/>
</dbReference>
<dbReference type="GO" id="GO:0006424">
    <property type="term" value="P:glutamyl-tRNA aminoacylation"/>
    <property type="evidence" value="ECO:0007669"/>
    <property type="project" value="InterPro"/>
</dbReference>
<dbReference type="GO" id="GO:0009791">
    <property type="term" value="P:post-embryonic development"/>
    <property type="evidence" value="ECO:0007669"/>
    <property type="project" value="UniProtKB-ARBA"/>
</dbReference>
<dbReference type="GO" id="GO:0048608">
    <property type="term" value="P:reproductive structure development"/>
    <property type="evidence" value="ECO:0007669"/>
    <property type="project" value="UniProtKB-ARBA"/>
</dbReference>
<dbReference type="CDD" id="cd00808">
    <property type="entry name" value="GluRS_core"/>
    <property type="match status" value="1"/>
</dbReference>
<dbReference type="FunFam" id="1.10.10.350:FF:000004">
    <property type="entry name" value="Glutamate--tRNA ligase chloroplastic/mitochondrial"/>
    <property type="match status" value="1"/>
</dbReference>
<dbReference type="FunFam" id="3.40.50.620:FF:000045">
    <property type="entry name" value="Glutamate--tRNA ligase, mitochondrial"/>
    <property type="match status" value="1"/>
</dbReference>
<dbReference type="Gene3D" id="1.10.10.350">
    <property type="match status" value="1"/>
</dbReference>
<dbReference type="Gene3D" id="3.40.50.620">
    <property type="entry name" value="HUPs"/>
    <property type="match status" value="1"/>
</dbReference>
<dbReference type="HAMAP" id="MF_00022">
    <property type="entry name" value="Glu_tRNA_synth_type1"/>
    <property type="match status" value="1"/>
</dbReference>
<dbReference type="InterPro" id="IPR045462">
    <property type="entry name" value="aa-tRNA-synth_I_cd-bd"/>
</dbReference>
<dbReference type="InterPro" id="IPR020751">
    <property type="entry name" value="aa-tRNA-synth_I_codon-bd_sub2"/>
</dbReference>
<dbReference type="InterPro" id="IPR001412">
    <property type="entry name" value="aa-tRNA-synth_I_CS"/>
</dbReference>
<dbReference type="InterPro" id="IPR008925">
    <property type="entry name" value="aa_tRNA-synth_I_cd-bd_sf"/>
</dbReference>
<dbReference type="InterPro" id="IPR004527">
    <property type="entry name" value="Glu-tRNA-ligase_bac/mito"/>
</dbReference>
<dbReference type="InterPro" id="IPR000924">
    <property type="entry name" value="Glu/Gln-tRNA-synth"/>
</dbReference>
<dbReference type="InterPro" id="IPR020058">
    <property type="entry name" value="Glu/Gln-tRNA-synth_Ib_cat-dom"/>
</dbReference>
<dbReference type="InterPro" id="IPR049940">
    <property type="entry name" value="GluQ/Sye"/>
</dbReference>
<dbReference type="InterPro" id="IPR033910">
    <property type="entry name" value="GluRS_core"/>
</dbReference>
<dbReference type="InterPro" id="IPR014729">
    <property type="entry name" value="Rossmann-like_a/b/a_fold"/>
</dbReference>
<dbReference type="NCBIfam" id="TIGR00464">
    <property type="entry name" value="gltX_bact"/>
    <property type="match status" value="1"/>
</dbReference>
<dbReference type="PANTHER" id="PTHR43311">
    <property type="entry name" value="GLUTAMATE--TRNA LIGASE"/>
    <property type="match status" value="1"/>
</dbReference>
<dbReference type="PANTHER" id="PTHR43311:SF2">
    <property type="entry name" value="GLUTAMATE--TRNA LIGASE, MITOCHONDRIAL-RELATED"/>
    <property type="match status" value="1"/>
</dbReference>
<dbReference type="Pfam" id="PF19269">
    <property type="entry name" value="Anticodon_2"/>
    <property type="match status" value="1"/>
</dbReference>
<dbReference type="Pfam" id="PF00749">
    <property type="entry name" value="tRNA-synt_1c"/>
    <property type="match status" value="1"/>
</dbReference>
<dbReference type="PRINTS" id="PR00987">
    <property type="entry name" value="TRNASYNTHGLU"/>
</dbReference>
<dbReference type="SUPFAM" id="SSF48163">
    <property type="entry name" value="An anticodon-binding domain of class I aminoacyl-tRNA synthetases"/>
    <property type="match status" value="1"/>
</dbReference>
<dbReference type="SUPFAM" id="SSF52374">
    <property type="entry name" value="Nucleotidylyl transferase"/>
    <property type="match status" value="1"/>
</dbReference>
<dbReference type="PROSITE" id="PS00178">
    <property type="entry name" value="AA_TRNA_LIGASE_I"/>
    <property type="match status" value="1"/>
</dbReference>
<feature type="transit peptide" description="Chloroplast and mitochondrion" evidence="2">
    <location>
        <begin position="1"/>
        <end status="unknown"/>
    </location>
</feature>
<feature type="chain" id="PRO_0000119736" description="Glutamate--tRNA ligase, chloroplastic/mitochondrial">
    <location>
        <begin status="unknown"/>
        <end position="560"/>
    </location>
</feature>
<feature type="short sequence motif" description="'HIGH' region">
    <location>
        <begin position="50"/>
        <end position="60"/>
    </location>
</feature>
<feature type="short sequence motif" description="'KMSKS' region">
    <location>
        <begin position="291"/>
        <end position="295"/>
    </location>
</feature>
<feature type="binding site" evidence="1">
    <location>
        <begin position="47"/>
        <end position="49"/>
    </location>
    <ligand>
        <name>L-glutamate</name>
        <dbReference type="ChEBI" id="CHEBI:29985"/>
    </ligand>
</feature>
<feature type="binding site" evidence="1">
    <location>
        <position position="57"/>
    </location>
    <ligand>
        <name>ATP</name>
        <dbReference type="ChEBI" id="CHEBI:30616"/>
    </ligand>
</feature>
<feature type="binding site" evidence="1">
    <location>
        <position position="83"/>
    </location>
    <ligand>
        <name>L-glutamate</name>
        <dbReference type="ChEBI" id="CHEBI:29985"/>
    </ligand>
</feature>
<feature type="binding site" evidence="1">
    <location>
        <begin position="235"/>
        <end position="239"/>
    </location>
    <ligand>
        <name>L-glutamate</name>
        <dbReference type="ChEBI" id="CHEBI:29985"/>
    </ligand>
</feature>
<feature type="binding site" evidence="1">
    <location>
        <position position="253"/>
    </location>
    <ligand>
        <name>L-glutamate</name>
        <dbReference type="ChEBI" id="CHEBI:29985"/>
    </ligand>
</feature>
<feature type="binding site" evidence="1">
    <location>
        <position position="256"/>
    </location>
    <ligand>
        <name>ATP</name>
        <dbReference type="ChEBI" id="CHEBI:30616"/>
    </ligand>
</feature>
<feature type="binding site" evidence="1">
    <location>
        <begin position="291"/>
        <end position="295"/>
    </location>
    <ligand>
        <name>ATP</name>
        <dbReference type="ChEBI" id="CHEBI:30616"/>
    </ligand>
</feature>
<sequence>MAASNFMGSSARLRVGLLPSVTPRLSRRALATRASADSGGSGPVRVRFAPSPTGNLHVGGARTALFNYLFARSRGGKFVLRVEDTDLERSTKKSEEAVLTDLSWLGLDWDEGPDIGGDFGPYRQSERNALYKEHAQKLMESGAVYRCFCSNEELEKMKETANRMKIPPVYMGKWATASDAEVQQELEKGTPYTYRFRVPKEGSLKINDLIRGEVSWNLNTLGDFVIMRSNGQPVYNFCVTVDDATMRISHVIRAEEHLPNTLRQALIYKALGFAMPLFAHVSLILAPDKSKLSKRHGATSVGQYKEMGYLPQAMVNYLALLGWGDGTENEFFTIDDLVEKFTIDRVNKSGAVFDATKLKWMNGQHLRSLPSDLLIKDFEDQWRSTGILLESESGFAKEAAELLKEGIDLITDADAALCKLLSYPLHETLSSDEAKSVVEDKLSEVASGLISAYDSGELDQALAEGHDGWKKWVKSFGKTHKRKGKSLFMPLRVLLTGKLHGPAMDSTVILVHKAGTSGAVAPQSGFVSLDERFKILKEVNWESLQKQQESPVESAVPAAS</sequence>
<accession>Q43768</accession>
<protein>
    <recommendedName>
        <fullName>Glutamate--tRNA ligase, chloroplastic/mitochondrial</fullName>
        <ecNumber>6.1.1.17</ecNumber>
    </recommendedName>
    <alternativeName>
        <fullName>Glutamyl-tRNA synthetase</fullName>
        <shortName>GluRS</shortName>
    </alternativeName>
</protein>
<comment type="function">
    <text evidence="1">Catalyzes the attachment of glutamate to tRNA(Glu) in a two-step reaction: glutamate is first activated by ATP to form Glu-AMP and then transferred to the acceptor end of tRNA(Glu).</text>
</comment>
<comment type="catalytic activity">
    <reaction>
        <text>tRNA(Glu) + L-glutamate + ATP = L-glutamyl-tRNA(Glu) + AMP + diphosphate</text>
        <dbReference type="Rhea" id="RHEA:23540"/>
        <dbReference type="Rhea" id="RHEA-COMP:9663"/>
        <dbReference type="Rhea" id="RHEA-COMP:9680"/>
        <dbReference type="ChEBI" id="CHEBI:29985"/>
        <dbReference type="ChEBI" id="CHEBI:30616"/>
        <dbReference type="ChEBI" id="CHEBI:33019"/>
        <dbReference type="ChEBI" id="CHEBI:78442"/>
        <dbReference type="ChEBI" id="CHEBI:78520"/>
        <dbReference type="ChEBI" id="CHEBI:456215"/>
        <dbReference type="EC" id="6.1.1.17"/>
    </reaction>
</comment>
<comment type="subcellular location">
    <subcellularLocation>
        <location evidence="3">Plastid</location>
        <location evidence="3">Chloroplast</location>
    </subcellularLocation>
    <subcellularLocation>
        <location evidence="3">Mitochondrion</location>
    </subcellularLocation>
</comment>
<comment type="similarity">
    <text evidence="3">Belongs to the class-I aminoacyl-tRNA synthetase family. Glutamate--tRNA ligase type 1 subfamily.</text>
</comment>
<evidence type="ECO:0000250" key="1"/>
<evidence type="ECO:0000255" key="2"/>
<evidence type="ECO:0000305" key="3"/>
<reference key="1">
    <citation type="submission" date="1994-12" db="EMBL/GenBank/DDBJ databases">
        <authorList>
            <person name="Andersen R.V."/>
        </authorList>
    </citation>
    <scope>NUCLEOTIDE SEQUENCE [MRNA]</scope>
    <source>
        <strain>cv. Svalofs Bonus</strain>
        <tissue>Leaf</tissue>
    </source>
</reference>
<keyword id="KW-0030">Aminoacyl-tRNA synthetase</keyword>
<keyword id="KW-0067">ATP-binding</keyword>
<keyword id="KW-0150">Chloroplast</keyword>
<keyword id="KW-0436">Ligase</keyword>
<keyword id="KW-0496">Mitochondrion</keyword>
<keyword id="KW-0547">Nucleotide-binding</keyword>
<keyword id="KW-0934">Plastid</keyword>
<keyword id="KW-0648">Protein biosynthesis</keyword>
<keyword id="KW-0694">RNA-binding</keyword>
<keyword id="KW-0809">Transit peptide</keyword>
<organism>
    <name type="scientific">Hordeum vulgare</name>
    <name type="common">Barley</name>
    <dbReference type="NCBI Taxonomy" id="4513"/>
    <lineage>
        <taxon>Eukaryota</taxon>
        <taxon>Viridiplantae</taxon>
        <taxon>Streptophyta</taxon>
        <taxon>Embryophyta</taxon>
        <taxon>Tracheophyta</taxon>
        <taxon>Spermatophyta</taxon>
        <taxon>Magnoliopsida</taxon>
        <taxon>Liliopsida</taxon>
        <taxon>Poales</taxon>
        <taxon>Poaceae</taxon>
        <taxon>BOP clade</taxon>
        <taxon>Pooideae</taxon>
        <taxon>Triticodae</taxon>
        <taxon>Triticeae</taxon>
        <taxon>Hordeinae</taxon>
        <taxon>Hordeum</taxon>
    </lineage>
</organism>